<proteinExistence type="evidence at protein level"/>
<dbReference type="EC" id="2.7.13.3"/>
<dbReference type="EMBL" id="M36066">
    <property type="protein sequence ID" value="AAA24041.1"/>
    <property type="molecule type" value="Genomic_DNA"/>
</dbReference>
<dbReference type="EMBL" id="U00096">
    <property type="protein sequence ID" value="AAC73789.1"/>
    <property type="molecule type" value="Genomic_DNA"/>
</dbReference>
<dbReference type="EMBL" id="AP009048">
    <property type="protein sequence ID" value="BAA35352.1"/>
    <property type="molecule type" value="Genomic_DNA"/>
</dbReference>
<dbReference type="PIR" id="B42372">
    <property type="entry name" value="B42372"/>
</dbReference>
<dbReference type="RefSeq" id="NP_415223.1">
    <property type="nucleotide sequence ID" value="NC_000913.3"/>
</dbReference>
<dbReference type="RefSeq" id="WP_001310640.1">
    <property type="nucleotide sequence ID" value="NZ_SSZK01000045.1"/>
</dbReference>
<dbReference type="PDB" id="2KSF">
    <property type="method" value="NMR"/>
    <property type="chains" value="A=397-502"/>
</dbReference>
<dbReference type="PDB" id="4QPR">
    <property type="method" value="X-ray"/>
    <property type="resolution" value="1.55 A"/>
    <property type="chains" value="A=515-646"/>
</dbReference>
<dbReference type="PDB" id="4Y2F">
    <property type="method" value="X-ray"/>
    <property type="resolution" value="1.40 A"/>
    <property type="chains" value="A=515-646"/>
</dbReference>
<dbReference type="PDB" id="6LGQ">
    <property type="method" value="X-ray"/>
    <property type="resolution" value="3.00 A"/>
    <property type="chains" value="C=661-894"/>
</dbReference>
<dbReference type="PDBsum" id="2KSF"/>
<dbReference type="PDBsum" id="4QPR"/>
<dbReference type="PDBsum" id="4Y2F"/>
<dbReference type="PDBsum" id="6LGQ"/>
<dbReference type="BMRB" id="P21865"/>
<dbReference type="SMR" id="P21865"/>
<dbReference type="BioGRID" id="4259925">
    <property type="interactions" value="14"/>
</dbReference>
<dbReference type="BioGRID" id="851085">
    <property type="interactions" value="3"/>
</dbReference>
<dbReference type="DIP" id="DIP-10062N"/>
<dbReference type="FunCoup" id="P21865">
    <property type="interactions" value="393"/>
</dbReference>
<dbReference type="IntAct" id="P21865">
    <property type="interactions" value="6"/>
</dbReference>
<dbReference type="STRING" id="511145.b0695"/>
<dbReference type="jPOST" id="P21865"/>
<dbReference type="PaxDb" id="511145-b0695"/>
<dbReference type="EnsemblBacteria" id="AAC73789">
    <property type="protein sequence ID" value="AAC73789"/>
    <property type="gene ID" value="b0695"/>
</dbReference>
<dbReference type="GeneID" id="946744"/>
<dbReference type="KEGG" id="ecj:JW0683"/>
<dbReference type="KEGG" id="eco:b0695"/>
<dbReference type="KEGG" id="ecoc:C3026_03470"/>
<dbReference type="PATRIC" id="fig|1411691.4.peg.1580"/>
<dbReference type="EchoBASE" id="EB0511"/>
<dbReference type="eggNOG" id="COG2205">
    <property type="taxonomic scope" value="Bacteria"/>
</dbReference>
<dbReference type="HOGENOM" id="CLU_000445_113_0_6"/>
<dbReference type="InParanoid" id="P21865"/>
<dbReference type="OMA" id="ISVHVIS"/>
<dbReference type="OrthoDB" id="9806130at2"/>
<dbReference type="PhylomeDB" id="P21865"/>
<dbReference type="BioCyc" id="EcoCyc:KDPD-MONOMER"/>
<dbReference type="BioCyc" id="MetaCyc:KDPD-MONOMER"/>
<dbReference type="BRENDA" id="2.7.13.3">
    <property type="organism ID" value="2026"/>
</dbReference>
<dbReference type="EvolutionaryTrace" id="P21865"/>
<dbReference type="PRO" id="PR:P21865"/>
<dbReference type="Proteomes" id="UP000000625">
    <property type="component" value="Chromosome"/>
</dbReference>
<dbReference type="GO" id="GO:0005829">
    <property type="term" value="C:cytosol"/>
    <property type="evidence" value="ECO:0000314"/>
    <property type="project" value="EcoCyc"/>
</dbReference>
<dbReference type="GO" id="GO:0030288">
    <property type="term" value="C:outer membrane-bounded periplasmic space"/>
    <property type="evidence" value="ECO:0000314"/>
    <property type="project" value="EcoCyc"/>
</dbReference>
<dbReference type="GO" id="GO:0005886">
    <property type="term" value="C:plasma membrane"/>
    <property type="evidence" value="ECO:0000314"/>
    <property type="project" value="EcoCyc"/>
</dbReference>
<dbReference type="GO" id="GO:0005524">
    <property type="term" value="F:ATP binding"/>
    <property type="evidence" value="ECO:0007669"/>
    <property type="project" value="UniProtKB-KW"/>
</dbReference>
<dbReference type="GO" id="GO:0000155">
    <property type="term" value="F:phosphorelay sensor kinase activity"/>
    <property type="evidence" value="ECO:0000314"/>
    <property type="project" value="EcoCyc"/>
</dbReference>
<dbReference type="GO" id="GO:0042803">
    <property type="term" value="F:protein homodimerization activity"/>
    <property type="evidence" value="ECO:0000314"/>
    <property type="project" value="EcoCyc"/>
</dbReference>
<dbReference type="GO" id="GO:0016772">
    <property type="term" value="F:transferase activity, transferring phosphorus-containing groups"/>
    <property type="evidence" value="ECO:0000314"/>
    <property type="project" value="EcoCyc"/>
</dbReference>
<dbReference type="GO" id="GO:0035865">
    <property type="term" value="P:cellular response to potassium ion"/>
    <property type="evidence" value="ECO:0000314"/>
    <property type="project" value="EcoCyc"/>
</dbReference>
<dbReference type="GO" id="GO:0007165">
    <property type="term" value="P:signal transduction"/>
    <property type="evidence" value="ECO:0000314"/>
    <property type="project" value="EcoCyc"/>
</dbReference>
<dbReference type="CDD" id="cd00075">
    <property type="entry name" value="HATPase"/>
    <property type="match status" value="1"/>
</dbReference>
<dbReference type="CDD" id="cd00082">
    <property type="entry name" value="HisKA"/>
    <property type="match status" value="1"/>
</dbReference>
<dbReference type="CDD" id="cd01987">
    <property type="entry name" value="USP_KdpD-like"/>
    <property type="match status" value="1"/>
</dbReference>
<dbReference type="FunFam" id="3.40.50.300:FF:000483">
    <property type="entry name" value="Sensor histidine kinase KdpD"/>
    <property type="match status" value="1"/>
</dbReference>
<dbReference type="FunFam" id="1.10.287.130:FF:000043">
    <property type="entry name" value="Two-component sensor histidine kinase KdpD"/>
    <property type="match status" value="1"/>
</dbReference>
<dbReference type="FunFam" id="1.20.120.620:FF:000001">
    <property type="entry name" value="Two-component sensor histidine kinase KdpD"/>
    <property type="match status" value="1"/>
</dbReference>
<dbReference type="FunFam" id="3.30.450.40:FF:000038">
    <property type="entry name" value="Two-component sensor histidine kinase KdpD"/>
    <property type="match status" value="1"/>
</dbReference>
<dbReference type="FunFam" id="3.30.565.10:FF:000042">
    <property type="entry name" value="Two-component sensor histidine kinase KdpD"/>
    <property type="match status" value="1"/>
</dbReference>
<dbReference type="FunFam" id="3.40.50.620:FF:000169">
    <property type="entry name" value="Two-component system sensor histidine kinase KdbD"/>
    <property type="match status" value="1"/>
</dbReference>
<dbReference type="Gene3D" id="1.10.287.130">
    <property type="match status" value="1"/>
</dbReference>
<dbReference type="Gene3D" id="3.30.450.40">
    <property type="match status" value="1"/>
</dbReference>
<dbReference type="Gene3D" id="1.20.120.620">
    <property type="entry name" value="Backbone structure of the membrane domain of e. Coli histidine kinase receptor kdpd"/>
    <property type="match status" value="1"/>
</dbReference>
<dbReference type="Gene3D" id="3.30.565.10">
    <property type="entry name" value="Histidine kinase-like ATPase, C-terminal domain"/>
    <property type="match status" value="1"/>
</dbReference>
<dbReference type="Gene3D" id="3.40.50.300">
    <property type="entry name" value="P-loop containing nucleotide triphosphate hydrolases"/>
    <property type="match status" value="1"/>
</dbReference>
<dbReference type="InterPro" id="IPR003018">
    <property type="entry name" value="GAF"/>
</dbReference>
<dbReference type="InterPro" id="IPR029016">
    <property type="entry name" value="GAF-like_dom_sf"/>
</dbReference>
<dbReference type="InterPro" id="IPR036890">
    <property type="entry name" value="HATPase_C_sf"/>
</dbReference>
<dbReference type="InterPro" id="IPR005467">
    <property type="entry name" value="His_kinase_dom"/>
</dbReference>
<dbReference type="InterPro" id="IPR003661">
    <property type="entry name" value="HisK_dim/P_dom"/>
</dbReference>
<dbReference type="InterPro" id="IPR036097">
    <property type="entry name" value="HisK_dim/P_sf"/>
</dbReference>
<dbReference type="InterPro" id="IPR052023">
    <property type="entry name" value="Histidine_kinase_KdpD"/>
</dbReference>
<dbReference type="InterPro" id="IPR038318">
    <property type="entry name" value="KdpD_sf"/>
</dbReference>
<dbReference type="InterPro" id="IPR025201">
    <property type="entry name" value="KdpD_TM"/>
</dbReference>
<dbReference type="InterPro" id="IPR027417">
    <property type="entry name" value="P-loop_NTPase"/>
</dbReference>
<dbReference type="InterPro" id="IPR004358">
    <property type="entry name" value="Sig_transdc_His_kin-like_C"/>
</dbReference>
<dbReference type="InterPro" id="IPR003852">
    <property type="entry name" value="Sig_transdc_His_kinase_KdpD_N"/>
</dbReference>
<dbReference type="NCBIfam" id="NF007793">
    <property type="entry name" value="PRK10490.1"/>
    <property type="match status" value="1"/>
</dbReference>
<dbReference type="PANTHER" id="PTHR45569">
    <property type="entry name" value="SENSOR PROTEIN KDPD"/>
    <property type="match status" value="1"/>
</dbReference>
<dbReference type="PANTHER" id="PTHR45569:SF1">
    <property type="entry name" value="SENSOR PROTEIN KDPD"/>
    <property type="match status" value="1"/>
</dbReference>
<dbReference type="Pfam" id="PF13493">
    <property type="entry name" value="DUF4118"/>
    <property type="match status" value="1"/>
</dbReference>
<dbReference type="Pfam" id="PF13492">
    <property type="entry name" value="GAF_3"/>
    <property type="match status" value="1"/>
</dbReference>
<dbReference type="Pfam" id="PF02518">
    <property type="entry name" value="HATPase_c"/>
    <property type="match status" value="1"/>
</dbReference>
<dbReference type="Pfam" id="PF00512">
    <property type="entry name" value="HisKA"/>
    <property type="match status" value="1"/>
</dbReference>
<dbReference type="Pfam" id="PF02702">
    <property type="entry name" value="KdpD"/>
    <property type="match status" value="1"/>
</dbReference>
<dbReference type="PRINTS" id="PR00344">
    <property type="entry name" value="BCTRLSENSOR"/>
</dbReference>
<dbReference type="SMART" id="SM00387">
    <property type="entry name" value="HATPase_c"/>
    <property type="match status" value="1"/>
</dbReference>
<dbReference type="SMART" id="SM00388">
    <property type="entry name" value="HisKA"/>
    <property type="match status" value="1"/>
</dbReference>
<dbReference type="SUPFAM" id="SSF52402">
    <property type="entry name" value="Adenine nucleotide alpha hydrolases-like"/>
    <property type="match status" value="1"/>
</dbReference>
<dbReference type="SUPFAM" id="SSF55874">
    <property type="entry name" value="ATPase domain of HSP90 chaperone/DNA topoisomerase II/histidine kinase"/>
    <property type="match status" value="1"/>
</dbReference>
<dbReference type="SUPFAM" id="SSF47384">
    <property type="entry name" value="Homodimeric domain of signal transducing histidine kinase"/>
    <property type="match status" value="1"/>
</dbReference>
<dbReference type="PROSITE" id="PS50109">
    <property type="entry name" value="HIS_KIN"/>
    <property type="match status" value="1"/>
</dbReference>
<accession>P21865</accession>
<organism>
    <name type="scientific">Escherichia coli (strain K12)</name>
    <dbReference type="NCBI Taxonomy" id="83333"/>
    <lineage>
        <taxon>Bacteria</taxon>
        <taxon>Pseudomonadati</taxon>
        <taxon>Pseudomonadota</taxon>
        <taxon>Gammaproteobacteria</taxon>
        <taxon>Enterobacterales</taxon>
        <taxon>Enterobacteriaceae</taxon>
        <taxon>Escherichia</taxon>
    </lineage>
</organism>
<keyword id="KW-0002">3D-structure</keyword>
<keyword id="KW-0067">ATP-binding</keyword>
<keyword id="KW-0997">Cell inner membrane</keyword>
<keyword id="KW-1003">Cell membrane</keyword>
<keyword id="KW-0418">Kinase</keyword>
<keyword id="KW-0472">Membrane</keyword>
<keyword id="KW-0547">Nucleotide-binding</keyword>
<keyword id="KW-0597">Phosphoprotein</keyword>
<keyword id="KW-1185">Reference proteome</keyword>
<keyword id="KW-0808">Transferase</keyword>
<keyword id="KW-0812">Transmembrane</keyword>
<keyword id="KW-1133">Transmembrane helix</keyword>
<keyword id="KW-0902">Two-component regulatory system</keyword>
<protein>
    <recommendedName>
        <fullName>Sensor protein KdpD</fullName>
        <ecNumber>2.7.13.3</ecNumber>
    </recommendedName>
</protein>
<gene>
    <name type="primary">kdpD</name>
    <name type="ordered locus">b0695</name>
    <name type="ordered locus">JW0683</name>
</gene>
<comment type="function">
    <text evidence="2">Member of the two-component regulatory system KdpD/KdpE involved in the regulation of the kdp operon. KdpD may function as a membrane-associated protein kinase that phosphorylates KdpE in response to environmental signals.</text>
</comment>
<comment type="catalytic activity">
    <reaction>
        <text>ATP + protein L-histidine = ADP + protein N-phospho-L-histidine.</text>
        <dbReference type="EC" id="2.7.13.3"/>
    </reaction>
</comment>
<comment type="interaction">
    <interactant intactId="EBI-1123100">
        <id>P21865</id>
    </interactant>
    <interactant intactId="EBI-6403634">
        <id>P21866</id>
        <label>kdpE</label>
    </interactant>
    <organismsDiffer>false</organismsDiffer>
    <experiments>5</experiments>
</comment>
<comment type="interaction">
    <interactant intactId="EBI-1123100">
        <id>P21865</id>
    </interactant>
    <interactant intactId="EBI-547017">
        <id>P69829</id>
        <label>ptsN</label>
    </interactant>
    <organismsDiffer>false</organismsDiffer>
    <experiments>4</experiments>
</comment>
<comment type="subcellular location">
    <subcellularLocation>
        <location evidence="2">Cell inner membrane</location>
        <topology evidence="2">Multi-pass membrane protein</topology>
    </subcellularLocation>
</comment>
<comment type="similarity">
    <text evidence="3">In the central section; belongs to the universal stress protein A family.</text>
</comment>
<reference key="1">
    <citation type="journal article" date="1992" name="J. Bacteriol.">
        <title>KdpD and KdpE, proteins that control expression of the kdpABC operon, are members of the two-component sensor-effector class of regulators.</title>
        <authorList>
            <person name="Walderhaug M.O."/>
            <person name="Polarek J.W."/>
            <person name="Voelkner P."/>
            <person name="Daniel J.M."/>
            <person name="Hesse J.E."/>
            <person name="Altendorf K."/>
            <person name="Epstein W."/>
        </authorList>
    </citation>
    <scope>NUCLEOTIDE SEQUENCE [GENOMIC DNA]</scope>
    <scope>FUNCTION</scope>
    <scope>SUBCELLULAR LOCATION</scope>
    <source>
        <strain>K12</strain>
    </source>
</reference>
<reference key="2">
    <citation type="journal article" date="1996" name="DNA Res.">
        <title>A 718-kb DNA sequence of the Escherichia coli K-12 genome corresponding to the 12.7-28.0 min region on the linkage map.</title>
        <authorList>
            <person name="Oshima T."/>
            <person name="Aiba H."/>
            <person name="Baba T."/>
            <person name="Fujita K."/>
            <person name="Hayashi K."/>
            <person name="Honjo A."/>
            <person name="Ikemoto K."/>
            <person name="Inada T."/>
            <person name="Itoh T."/>
            <person name="Kajihara M."/>
            <person name="Kanai K."/>
            <person name="Kashimoto K."/>
            <person name="Kimura S."/>
            <person name="Kitagawa M."/>
            <person name="Makino K."/>
            <person name="Masuda S."/>
            <person name="Miki T."/>
            <person name="Mizobuchi K."/>
            <person name="Mori H."/>
            <person name="Motomura K."/>
            <person name="Nakamura Y."/>
            <person name="Nashimoto H."/>
            <person name="Nishio Y."/>
            <person name="Saito N."/>
            <person name="Sampei G."/>
            <person name="Seki Y."/>
            <person name="Tagami H."/>
            <person name="Takemoto K."/>
            <person name="Wada C."/>
            <person name="Yamamoto Y."/>
            <person name="Yano M."/>
            <person name="Horiuchi T."/>
        </authorList>
    </citation>
    <scope>NUCLEOTIDE SEQUENCE [LARGE SCALE GENOMIC DNA]</scope>
    <source>
        <strain>K12 / W3110 / ATCC 27325 / DSM 5911</strain>
    </source>
</reference>
<reference key="3">
    <citation type="journal article" date="1997" name="Science">
        <title>The complete genome sequence of Escherichia coli K-12.</title>
        <authorList>
            <person name="Blattner F.R."/>
            <person name="Plunkett G. III"/>
            <person name="Bloch C.A."/>
            <person name="Perna N.T."/>
            <person name="Burland V."/>
            <person name="Riley M."/>
            <person name="Collado-Vides J."/>
            <person name="Glasner J.D."/>
            <person name="Rode C.K."/>
            <person name="Mayhew G.F."/>
            <person name="Gregor J."/>
            <person name="Davis N.W."/>
            <person name="Kirkpatrick H.A."/>
            <person name="Goeden M.A."/>
            <person name="Rose D.J."/>
            <person name="Mau B."/>
            <person name="Shao Y."/>
        </authorList>
    </citation>
    <scope>NUCLEOTIDE SEQUENCE [LARGE SCALE GENOMIC DNA]</scope>
    <source>
        <strain>K12 / MG1655 / ATCC 47076</strain>
    </source>
</reference>
<reference key="4">
    <citation type="journal article" date="2006" name="Mol. Syst. Biol.">
        <title>Highly accurate genome sequences of Escherichia coli K-12 strains MG1655 and W3110.</title>
        <authorList>
            <person name="Hayashi K."/>
            <person name="Morooka N."/>
            <person name="Yamamoto Y."/>
            <person name="Fujita K."/>
            <person name="Isono K."/>
            <person name="Choi S."/>
            <person name="Ohtsubo E."/>
            <person name="Baba T."/>
            <person name="Wanner B.L."/>
            <person name="Mori H."/>
            <person name="Horiuchi T."/>
        </authorList>
    </citation>
    <scope>NUCLEOTIDE SEQUENCE [LARGE SCALE GENOMIC DNA]</scope>
    <source>
        <strain>K12 / W3110 / ATCC 27325 / DSM 5911</strain>
    </source>
</reference>
<reference key="5">
    <citation type="journal article" date="1995" name="J. Biol. Chem.">
        <title>Membrane topology analysis of the sensor kinase KdpD of Escherichia coli.</title>
        <authorList>
            <person name="Zimmann P."/>
            <person name="Puppe W."/>
            <person name="Altendorf K."/>
        </authorList>
    </citation>
    <scope>TOPOLOGY</scope>
</reference>
<reference key="6">
    <citation type="journal article" date="2005" name="Science">
        <title>Global topology analysis of the Escherichia coli inner membrane proteome.</title>
        <authorList>
            <person name="Daley D.O."/>
            <person name="Rapp M."/>
            <person name="Granseth E."/>
            <person name="Melen K."/>
            <person name="Drew D."/>
            <person name="von Heijne G."/>
        </authorList>
    </citation>
    <scope>TOPOLOGY [LARGE SCALE ANALYSIS]</scope>
    <source>
        <strain>K12 / MG1655 / ATCC 47076</strain>
    </source>
</reference>
<evidence type="ECO:0000255" key="1">
    <source>
        <dbReference type="PROSITE-ProRule" id="PRU00107"/>
    </source>
</evidence>
<evidence type="ECO:0000269" key="2">
    <source>
    </source>
</evidence>
<evidence type="ECO:0000305" key="3"/>
<evidence type="ECO:0007829" key="4">
    <source>
        <dbReference type="PDB" id="2KSF"/>
    </source>
</evidence>
<evidence type="ECO:0007829" key="5">
    <source>
        <dbReference type="PDB" id="4Y2F"/>
    </source>
</evidence>
<evidence type="ECO:0007829" key="6">
    <source>
        <dbReference type="PDB" id="6LGQ"/>
    </source>
</evidence>
<sequence>MNNEPLRPDPDRLLEQTAAPHRGKLKVFFGACAGVGKTWAMLAEAQRLRAQGLDIVVGVVETHGRKDTAAMLEGLAVLPLKRQAYRGRHISEFDLDAALARRPALILMDELAHSNAPGSRHPKRWQDIEELLEAGIDVFTTVNVQHLESLNDVVSGVTGIQVRETVPDPFFDAADDVVLVDLPPDDLRQRLKEGKVYIAGQAERAIEHFFRKGNLIALRELALRRTADRVDEQMRAWRGHPGEEKVWHTRDAILLCIGHNTGSEKLVRAAARLASRLGSVWHAVYVETPALHRLPEKKRRAILSALRLAQELGAETATLSDPAEEKAVVRYAREHNLGKIILGRPASRRWWRRETFADRLARIAPDLDQVLVALDEPPARTINNAPDNRSFKDKWRVQIQGCVVAAALCAVITLIAMQWLMAFDAANLVMLYLLGVVVVALFYGRWPSVVATVINVVSFDLFFIAPRGTLAVSDVQYLLTFAVMLTVGLVIGNLTAGVRYQARVARYREQRTRHLYEMSKALAVGRSPQDIAATSEQFIASTFHARSQVLLPDDNGKLQPLTHPQGMTPWDDAIAQWSFDKGLPAGAGTDTLPGVPYQILPLKSGEKTYGLVVVEPGNLRQLMIPEQQRLLETFTLLVANALERLTLTASEEQARMASEREQIRNALLAALSHDLRTPLTVLFGQAEILTLDLASEGSPHARQASEIRQHVLNTTRLVNNLLDMARIQSGGFNLKKEWLTLEEVVGSALQMLEPGLSSPINLSLPEPLTLIHVDGPLFERVLINLLENAVKYAGAQAEIGIDAHVEGENLQLDVWDNGPGLPPGQEQTIFDKFARGNKESAVPGVGLGLAICRAIVDVHGGTITAFNRPEGGACFRVTLPQQTAPELEEFHEDM</sequence>
<feature type="chain" id="PRO_0000074772" description="Sensor protein KdpD">
    <location>
        <begin position="1"/>
        <end position="894"/>
    </location>
</feature>
<feature type="topological domain" description="Cytoplasmic" evidence="3">
    <location>
        <begin position="1"/>
        <end position="400"/>
    </location>
</feature>
<feature type="transmembrane region" description="Helical" evidence="3">
    <location>
        <begin position="401"/>
        <end position="423"/>
    </location>
</feature>
<feature type="topological domain" description="Periplasmic" evidence="3">
    <location>
        <begin position="424"/>
        <end position="427"/>
    </location>
</feature>
<feature type="transmembrane region" description="Helical" evidence="3">
    <location>
        <begin position="428"/>
        <end position="444"/>
    </location>
</feature>
<feature type="topological domain" description="Cytoplasmic" evidence="3">
    <location>
        <position position="445"/>
    </location>
</feature>
<feature type="transmembrane region" description="Helical" evidence="3">
    <location>
        <begin position="446"/>
        <end position="466"/>
    </location>
</feature>
<feature type="topological domain" description="Periplasmic" evidence="3">
    <location>
        <begin position="467"/>
        <end position="474"/>
    </location>
</feature>
<feature type="transmembrane region" description="Helical" evidence="3">
    <location>
        <begin position="475"/>
        <end position="498"/>
    </location>
</feature>
<feature type="topological domain" description="Cytoplasmic" evidence="3">
    <location>
        <begin position="499"/>
        <end position="894"/>
    </location>
</feature>
<feature type="domain" description="Histidine kinase" evidence="1">
    <location>
        <begin position="670"/>
        <end position="883"/>
    </location>
</feature>
<feature type="modified residue" description="Phosphohistidine; by autocatalysis" evidence="1">
    <location>
        <position position="673"/>
    </location>
</feature>
<feature type="strand" evidence="4">
    <location>
        <begin position="399"/>
        <end position="401"/>
    </location>
</feature>
<feature type="helix" evidence="4">
    <location>
        <begin position="402"/>
        <end position="420"/>
    </location>
</feature>
<feature type="helix" evidence="4">
    <location>
        <begin position="430"/>
        <end position="443"/>
    </location>
</feature>
<feature type="helix" evidence="4">
    <location>
        <begin position="450"/>
        <end position="461"/>
    </location>
</feature>
<feature type="helix" evidence="4">
    <location>
        <begin position="475"/>
        <end position="498"/>
    </location>
</feature>
<feature type="helix" evidence="5">
    <location>
        <begin position="515"/>
        <end position="523"/>
    </location>
</feature>
<feature type="helix" evidence="5">
    <location>
        <begin position="528"/>
        <end position="543"/>
    </location>
</feature>
<feature type="strand" evidence="5">
    <location>
        <begin position="545"/>
        <end position="552"/>
    </location>
</feature>
<feature type="helix" evidence="5">
    <location>
        <begin position="572"/>
        <end position="581"/>
    </location>
</feature>
<feature type="strand" evidence="5">
    <location>
        <begin position="589"/>
        <end position="592"/>
    </location>
</feature>
<feature type="strand" evidence="5">
    <location>
        <begin position="595"/>
        <end position="604"/>
    </location>
</feature>
<feature type="strand" evidence="5">
    <location>
        <begin position="607"/>
        <end position="617"/>
    </location>
</feature>
<feature type="helix" evidence="5">
    <location>
        <begin position="619"/>
        <end position="622"/>
    </location>
</feature>
<feature type="helix" evidence="5">
    <location>
        <begin position="625"/>
        <end position="646"/>
    </location>
</feature>
<feature type="helix" evidence="6">
    <location>
        <begin position="662"/>
        <end position="674"/>
    </location>
</feature>
<feature type="helix" evidence="6">
    <location>
        <begin position="676"/>
        <end position="695"/>
    </location>
</feature>
<feature type="helix" evidence="6">
    <location>
        <begin position="701"/>
        <end position="726"/>
    </location>
</feature>
<feature type="strand" evidence="6">
    <location>
        <begin position="737"/>
        <end position="740"/>
    </location>
</feature>
<feature type="helix" evidence="6">
    <location>
        <begin position="741"/>
        <end position="752"/>
    </location>
</feature>
<feature type="strand" evidence="6">
    <location>
        <begin position="756"/>
        <end position="758"/>
    </location>
</feature>
<feature type="strand" evidence="6">
    <location>
        <begin position="761"/>
        <end position="763"/>
    </location>
</feature>
<feature type="strand" evidence="6">
    <location>
        <begin position="770"/>
        <end position="773"/>
    </location>
</feature>
<feature type="helix" evidence="6">
    <location>
        <begin position="775"/>
        <end position="792"/>
    </location>
</feature>
<feature type="strand" evidence="6">
    <location>
        <begin position="799"/>
        <end position="816"/>
    </location>
</feature>
<feature type="strand" evidence="6">
    <location>
        <begin position="826"/>
        <end position="828"/>
    </location>
</feature>
<feature type="helix" evidence="6">
    <location>
        <begin position="849"/>
        <end position="858"/>
    </location>
</feature>
<feature type="strand" evidence="6">
    <location>
        <begin position="862"/>
        <end position="867"/>
    </location>
</feature>
<feature type="strand" evidence="6">
    <location>
        <begin position="869"/>
        <end position="880"/>
    </location>
</feature>
<name>KDPD_ECOLI</name>